<gene>
    <name evidence="1" type="primary">efp</name>
    <name type="ordered locus">XCC2272</name>
</gene>
<evidence type="ECO:0000255" key="1">
    <source>
        <dbReference type="HAMAP-Rule" id="MF_00141"/>
    </source>
</evidence>
<feature type="chain" id="PRO_0000094373" description="Elongation factor P">
    <location>
        <begin position="1"/>
        <end position="188"/>
    </location>
</feature>
<feature type="modified residue" description="N6-(3,6-diaminohexanoyl)-5-hydroxylysine" evidence="1">
    <location>
        <position position="34"/>
    </location>
</feature>
<accession>Q8P8G9</accession>
<protein>
    <recommendedName>
        <fullName evidence="1">Elongation factor P</fullName>
        <shortName evidence="1">EF-P</shortName>
    </recommendedName>
</protein>
<reference key="1">
    <citation type="journal article" date="2002" name="Nature">
        <title>Comparison of the genomes of two Xanthomonas pathogens with differing host specificities.</title>
        <authorList>
            <person name="da Silva A.C.R."/>
            <person name="Ferro J.A."/>
            <person name="Reinach F.C."/>
            <person name="Farah C.S."/>
            <person name="Furlan L.R."/>
            <person name="Quaggio R.B."/>
            <person name="Monteiro-Vitorello C.B."/>
            <person name="Van Sluys M.A."/>
            <person name="Almeida N.F. Jr."/>
            <person name="Alves L.M.C."/>
            <person name="do Amaral A.M."/>
            <person name="Bertolini M.C."/>
            <person name="Camargo L.E.A."/>
            <person name="Camarotte G."/>
            <person name="Cannavan F."/>
            <person name="Cardozo J."/>
            <person name="Chambergo F."/>
            <person name="Ciapina L.P."/>
            <person name="Cicarelli R.M.B."/>
            <person name="Coutinho L.L."/>
            <person name="Cursino-Santos J.R."/>
            <person name="El-Dorry H."/>
            <person name="Faria J.B."/>
            <person name="Ferreira A.J.S."/>
            <person name="Ferreira R.C.C."/>
            <person name="Ferro M.I.T."/>
            <person name="Formighieri E.F."/>
            <person name="Franco M.C."/>
            <person name="Greggio C.C."/>
            <person name="Gruber A."/>
            <person name="Katsuyama A.M."/>
            <person name="Kishi L.T."/>
            <person name="Leite R.P."/>
            <person name="Lemos E.G.M."/>
            <person name="Lemos M.V.F."/>
            <person name="Locali E.C."/>
            <person name="Machado M.A."/>
            <person name="Madeira A.M.B.N."/>
            <person name="Martinez-Rossi N.M."/>
            <person name="Martins E.C."/>
            <person name="Meidanis J."/>
            <person name="Menck C.F.M."/>
            <person name="Miyaki C.Y."/>
            <person name="Moon D.H."/>
            <person name="Moreira L.M."/>
            <person name="Novo M.T.M."/>
            <person name="Okura V.K."/>
            <person name="Oliveira M.C."/>
            <person name="Oliveira V.R."/>
            <person name="Pereira H.A."/>
            <person name="Rossi A."/>
            <person name="Sena J.A.D."/>
            <person name="Silva C."/>
            <person name="de Souza R.F."/>
            <person name="Spinola L.A.F."/>
            <person name="Takita M.A."/>
            <person name="Tamura R.E."/>
            <person name="Teixeira E.C."/>
            <person name="Tezza R.I.D."/>
            <person name="Trindade dos Santos M."/>
            <person name="Truffi D."/>
            <person name="Tsai S.M."/>
            <person name="White F.F."/>
            <person name="Setubal J.C."/>
            <person name="Kitajima J.P."/>
        </authorList>
    </citation>
    <scope>NUCLEOTIDE SEQUENCE [LARGE SCALE GENOMIC DNA]</scope>
    <source>
        <strain>ATCC 33913 / DSM 3586 / NCPPB 528 / LMG 568 / P 25</strain>
    </source>
</reference>
<name>EFP_XANCP</name>
<proteinExistence type="inferred from homology"/>
<comment type="function">
    <text evidence="1">Involved in peptide bond synthesis. Alleviates ribosome stalling that occurs when 3 or more consecutive Pro residues or the sequence PPG is present in a protein, possibly by augmenting the peptidyl transferase activity of the ribosome. Modification of Lys-34 is required for alleviation.</text>
</comment>
<comment type="pathway">
    <text evidence="1">Protein biosynthesis; polypeptide chain elongation.</text>
</comment>
<comment type="subcellular location">
    <subcellularLocation>
        <location evidence="1">Cytoplasm</location>
    </subcellularLocation>
</comment>
<comment type="PTM">
    <text evidence="1">May be beta-lysylated on the epsilon-amino group of Lys-34 by the combined action of EpmA and EpmB, and then hydroxylated on the C5 position of the same residue by EpmC (if this protein is present). Lysylation is critical for the stimulatory effect of EF-P on peptide-bond formation. The lysylation moiety may extend toward the peptidyltransferase center and stabilize the terminal 3-CCA end of the tRNA. Hydroxylation of the C5 position on Lys-34 may allow additional potential stabilizing hydrogen-bond interactions with the P-tRNA.</text>
</comment>
<comment type="similarity">
    <text evidence="1">Belongs to the elongation factor P family.</text>
</comment>
<dbReference type="EMBL" id="AE008922">
    <property type="protein sequence ID" value="AAM41551.1"/>
    <property type="molecule type" value="Genomic_DNA"/>
</dbReference>
<dbReference type="RefSeq" id="NP_637627.1">
    <property type="nucleotide sequence ID" value="NC_003902.1"/>
</dbReference>
<dbReference type="RefSeq" id="WP_011037416.1">
    <property type="nucleotide sequence ID" value="NC_003902.1"/>
</dbReference>
<dbReference type="SMR" id="Q8P8G9"/>
<dbReference type="STRING" id="190485.XCC2272"/>
<dbReference type="EnsemblBacteria" id="AAM41551">
    <property type="protein sequence ID" value="AAM41551"/>
    <property type="gene ID" value="XCC2272"/>
</dbReference>
<dbReference type="GeneID" id="58013151"/>
<dbReference type="KEGG" id="xcc:XCC2272"/>
<dbReference type="PATRIC" id="fig|190485.4.peg.2422"/>
<dbReference type="eggNOG" id="COG0231">
    <property type="taxonomic scope" value="Bacteria"/>
</dbReference>
<dbReference type="HOGENOM" id="CLU_074944_0_0_6"/>
<dbReference type="OrthoDB" id="9801844at2"/>
<dbReference type="UniPathway" id="UPA00345"/>
<dbReference type="Proteomes" id="UP000001010">
    <property type="component" value="Chromosome"/>
</dbReference>
<dbReference type="GO" id="GO:0005737">
    <property type="term" value="C:cytoplasm"/>
    <property type="evidence" value="ECO:0000318"/>
    <property type="project" value="GO_Central"/>
</dbReference>
<dbReference type="GO" id="GO:0003746">
    <property type="term" value="F:translation elongation factor activity"/>
    <property type="evidence" value="ECO:0000318"/>
    <property type="project" value="GO_Central"/>
</dbReference>
<dbReference type="GO" id="GO:0043043">
    <property type="term" value="P:peptide biosynthetic process"/>
    <property type="evidence" value="ECO:0007669"/>
    <property type="project" value="InterPro"/>
</dbReference>
<dbReference type="CDD" id="cd04470">
    <property type="entry name" value="S1_EF-P_repeat_1"/>
    <property type="match status" value="1"/>
</dbReference>
<dbReference type="CDD" id="cd05794">
    <property type="entry name" value="S1_EF-P_repeat_2"/>
    <property type="match status" value="1"/>
</dbReference>
<dbReference type="FunFam" id="2.30.30.30:FF:000039">
    <property type="entry name" value="Elongation factor P"/>
    <property type="match status" value="1"/>
</dbReference>
<dbReference type="FunFam" id="2.40.50.140:FF:000004">
    <property type="entry name" value="Elongation factor P"/>
    <property type="match status" value="1"/>
</dbReference>
<dbReference type="FunFam" id="2.40.50.140:FF:000009">
    <property type="entry name" value="Elongation factor P"/>
    <property type="match status" value="1"/>
</dbReference>
<dbReference type="Gene3D" id="2.30.30.30">
    <property type="match status" value="1"/>
</dbReference>
<dbReference type="Gene3D" id="2.40.50.140">
    <property type="entry name" value="Nucleic acid-binding proteins"/>
    <property type="match status" value="2"/>
</dbReference>
<dbReference type="HAMAP" id="MF_00141">
    <property type="entry name" value="EF_P"/>
    <property type="match status" value="1"/>
</dbReference>
<dbReference type="InterPro" id="IPR015365">
    <property type="entry name" value="Elong-fact-P_C"/>
</dbReference>
<dbReference type="InterPro" id="IPR012340">
    <property type="entry name" value="NA-bd_OB-fold"/>
</dbReference>
<dbReference type="InterPro" id="IPR014722">
    <property type="entry name" value="Rib_uL2_dom2"/>
</dbReference>
<dbReference type="InterPro" id="IPR020599">
    <property type="entry name" value="Transl_elong_fac_P/YeiP"/>
</dbReference>
<dbReference type="InterPro" id="IPR013185">
    <property type="entry name" value="Transl_elong_KOW-like"/>
</dbReference>
<dbReference type="InterPro" id="IPR001059">
    <property type="entry name" value="Transl_elong_P/YeiP_cen"/>
</dbReference>
<dbReference type="InterPro" id="IPR013852">
    <property type="entry name" value="Transl_elong_P/YeiP_CS"/>
</dbReference>
<dbReference type="InterPro" id="IPR011768">
    <property type="entry name" value="Transl_elongation_fac_P"/>
</dbReference>
<dbReference type="InterPro" id="IPR008991">
    <property type="entry name" value="Translation_prot_SH3-like_sf"/>
</dbReference>
<dbReference type="NCBIfam" id="TIGR00038">
    <property type="entry name" value="efp"/>
    <property type="match status" value="1"/>
</dbReference>
<dbReference type="NCBIfam" id="NF001810">
    <property type="entry name" value="PRK00529.1"/>
    <property type="match status" value="1"/>
</dbReference>
<dbReference type="PANTHER" id="PTHR30053">
    <property type="entry name" value="ELONGATION FACTOR P"/>
    <property type="match status" value="1"/>
</dbReference>
<dbReference type="PANTHER" id="PTHR30053:SF12">
    <property type="entry name" value="ELONGATION FACTOR P (EF-P) FAMILY PROTEIN"/>
    <property type="match status" value="1"/>
</dbReference>
<dbReference type="Pfam" id="PF01132">
    <property type="entry name" value="EFP"/>
    <property type="match status" value="1"/>
</dbReference>
<dbReference type="Pfam" id="PF08207">
    <property type="entry name" value="EFP_N"/>
    <property type="match status" value="1"/>
</dbReference>
<dbReference type="Pfam" id="PF09285">
    <property type="entry name" value="Elong-fact-P_C"/>
    <property type="match status" value="1"/>
</dbReference>
<dbReference type="PIRSF" id="PIRSF005901">
    <property type="entry name" value="EF-P"/>
    <property type="match status" value="1"/>
</dbReference>
<dbReference type="SMART" id="SM01185">
    <property type="entry name" value="EFP"/>
    <property type="match status" value="1"/>
</dbReference>
<dbReference type="SMART" id="SM00841">
    <property type="entry name" value="Elong-fact-P_C"/>
    <property type="match status" value="1"/>
</dbReference>
<dbReference type="SUPFAM" id="SSF50249">
    <property type="entry name" value="Nucleic acid-binding proteins"/>
    <property type="match status" value="2"/>
</dbReference>
<dbReference type="SUPFAM" id="SSF50104">
    <property type="entry name" value="Translation proteins SH3-like domain"/>
    <property type="match status" value="1"/>
</dbReference>
<dbReference type="PROSITE" id="PS01275">
    <property type="entry name" value="EFP"/>
    <property type="match status" value="1"/>
</dbReference>
<sequence>MATVGMNDVKNGMKILVNNEPAVITETEYVKPGKGQAFTRMKYRFIKSGRVVEMTMKATDDVEVADVVDTDMRYLYTDGEYWHFMDPESFEQVQADKAGMGGAEKWLKGEEDCIVTLWNGAPIWVQPPNFVELKITETDPGVRGDTSGGGGKPATLETGAVVRVPLFVNQDEVIKVDTRSGEYSARVK</sequence>
<keyword id="KW-0963">Cytoplasm</keyword>
<keyword id="KW-0251">Elongation factor</keyword>
<keyword id="KW-0379">Hydroxylation</keyword>
<keyword id="KW-0648">Protein biosynthesis</keyword>
<keyword id="KW-1185">Reference proteome</keyword>
<organism>
    <name type="scientific">Xanthomonas campestris pv. campestris (strain ATCC 33913 / DSM 3586 / NCPPB 528 / LMG 568 / P 25)</name>
    <dbReference type="NCBI Taxonomy" id="190485"/>
    <lineage>
        <taxon>Bacteria</taxon>
        <taxon>Pseudomonadati</taxon>
        <taxon>Pseudomonadota</taxon>
        <taxon>Gammaproteobacteria</taxon>
        <taxon>Lysobacterales</taxon>
        <taxon>Lysobacteraceae</taxon>
        <taxon>Xanthomonas</taxon>
    </lineage>
</organism>